<evidence type="ECO:0000255" key="1">
    <source>
        <dbReference type="HAMAP-Rule" id="MF_00011"/>
    </source>
</evidence>
<evidence type="ECO:0000305" key="2"/>
<dbReference type="EC" id="6.3.4.4" evidence="1"/>
<dbReference type="EMBL" id="CP000362">
    <property type="protein sequence ID" value="ABG31522.1"/>
    <property type="status" value="ALT_INIT"/>
    <property type="molecule type" value="Genomic_DNA"/>
</dbReference>
<dbReference type="RefSeq" id="WP_044033042.1">
    <property type="nucleotide sequence ID" value="NC_008209.1"/>
</dbReference>
<dbReference type="SMR" id="Q168S1"/>
<dbReference type="STRING" id="375451.RD1_1912"/>
<dbReference type="KEGG" id="rde:RD1_1912"/>
<dbReference type="eggNOG" id="COG0104">
    <property type="taxonomic scope" value="Bacteria"/>
</dbReference>
<dbReference type="HOGENOM" id="CLU_029848_0_0_5"/>
<dbReference type="OrthoDB" id="9807553at2"/>
<dbReference type="UniPathway" id="UPA00075">
    <property type="reaction ID" value="UER00335"/>
</dbReference>
<dbReference type="Proteomes" id="UP000007029">
    <property type="component" value="Chromosome"/>
</dbReference>
<dbReference type="GO" id="GO:0005737">
    <property type="term" value="C:cytoplasm"/>
    <property type="evidence" value="ECO:0007669"/>
    <property type="project" value="UniProtKB-SubCell"/>
</dbReference>
<dbReference type="GO" id="GO:0004019">
    <property type="term" value="F:adenylosuccinate synthase activity"/>
    <property type="evidence" value="ECO:0007669"/>
    <property type="project" value="UniProtKB-UniRule"/>
</dbReference>
<dbReference type="GO" id="GO:0005525">
    <property type="term" value="F:GTP binding"/>
    <property type="evidence" value="ECO:0007669"/>
    <property type="project" value="UniProtKB-UniRule"/>
</dbReference>
<dbReference type="GO" id="GO:0000287">
    <property type="term" value="F:magnesium ion binding"/>
    <property type="evidence" value="ECO:0007669"/>
    <property type="project" value="UniProtKB-UniRule"/>
</dbReference>
<dbReference type="GO" id="GO:0044208">
    <property type="term" value="P:'de novo' AMP biosynthetic process"/>
    <property type="evidence" value="ECO:0007669"/>
    <property type="project" value="UniProtKB-UniRule"/>
</dbReference>
<dbReference type="GO" id="GO:0046040">
    <property type="term" value="P:IMP metabolic process"/>
    <property type="evidence" value="ECO:0007669"/>
    <property type="project" value="TreeGrafter"/>
</dbReference>
<dbReference type="CDD" id="cd03108">
    <property type="entry name" value="AdSS"/>
    <property type="match status" value="1"/>
</dbReference>
<dbReference type="FunFam" id="1.10.300.10:FF:000001">
    <property type="entry name" value="Adenylosuccinate synthetase"/>
    <property type="match status" value="1"/>
</dbReference>
<dbReference type="FunFam" id="3.90.170.10:FF:000001">
    <property type="entry name" value="Adenylosuccinate synthetase"/>
    <property type="match status" value="1"/>
</dbReference>
<dbReference type="Gene3D" id="3.40.440.10">
    <property type="entry name" value="Adenylosuccinate Synthetase, subunit A, domain 1"/>
    <property type="match status" value="1"/>
</dbReference>
<dbReference type="Gene3D" id="1.10.300.10">
    <property type="entry name" value="Adenylosuccinate Synthetase, subunit A, domain 2"/>
    <property type="match status" value="1"/>
</dbReference>
<dbReference type="Gene3D" id="3.90.170.10">
    <property type="entry name" value="Adenylosuccinate Synthetase, subunit A, domain 3"/>
    <property type="match status" value="1"/>
</dbReference>
<dbReference type="HAMAP" id="MF_00011">
    <property type="entry name" value="Adenylosucc_synth"/>
    <property type="match status" value="1"/>
</dbReference>
<dbReference type="InterPro" id="IPR018220">
    <property type="entry name" value="Adenylosuccin_syn_GTP-bd"/>
</dbReference>
<dbReference type="InterPro" id="IPR033128">
    <property type="entry name" value="Adenylosuccin_syn_Lys_AS"/>
</dbReference>
<dbReference type="InterPro" id="IPR042109">
    <property type="entry name" value="Adenylosuccinate_synth_dom1"/>
</dbReference>
<dbReference type="InterPro" id="IPR042110">
    <property type="entry name" value="Adenylosuccinate_synth_dom2"/>
</dbReference>
<dbReference type="InterPro" id="IPR042111">
    <property type="entry name" value="Adenylosuccinate_synth_dom3"/>
</dbReference>
<dbReference type="InterPro" id="IPR001114">
    <property type="entry name" value="Adenylosuccinate_synthetase"/>
</dbReference>
<dbReference type="InterPro" id="IPR027417">
    <property type="entry name" value="P-loop_NTPase"/>
</dbReference>
<dbReference type="NCBIfam" id="NF002223">
    <property type="entry name" value="PRK01117.1"/>
    <property type="match status" value="1"/>
</dbReference>
<dbReference type="NCBIfam" id="TIGR00184">
    <property type="entry name" value="purA"/>
    <property type="match status" value="1"/>
</dbReference>
<dbReference type="PANTHER" id="PTHR11846">
    <property type="entry name" value="ADENYLOSUCCINATE SYNTHETASE"/>
    <property type="match status" value="1"/>
</dbReference>
<dbReference type="PANTHER" id="PTHR11846:SF0">
    <property type="entry name" value="ADENYLOSUCCINATE SYNTHETASE"/>
    <property type="match status" value="1"/>
</dbReference>
<dbReference type="Pfam" id="PF00709">
    <property type="entry name" value="Adenylsucc_synt"/>
    <property type="match status" value="1"/>
</dbReference>
<dbReference type="SMART" id="SM00788">
    <property type="entry name" value="Adenylsucc_synt"/>
    <property type="match status" value="1"/>
</dbReference>
<dbReference type="SUPFAM" id="SSF52540">
    <property type="entry name" value="P-loop containing nucleoside triphosphate hydrolases"/>
    <property type="match status" value="1"/>
</dbReference>
<dbReference type="PROSITE" id="PS01266">
    <property type="entry name" value="ADENYLOSUCCIN_SYN_1"/>
    <property type="match status" value="1"/>
</dbReference>
<dbReference type="PROSITE" id="PS00513">
    <property type="entry name" value="ADENYLOSUCCIN_SYN_2"/>
    <property type="match status" value="1"/>
</dbReference>
<protein>
    <recommendedName>
        <fullName evidence="1">Adenylosuccinate synthetase</fullName>
        <shortName evidence="1">AMPSase</shortName>
        <shortName evidence="1">AdSS</shortName>
        <ecNumber evidence="1">6.3.4.4</ecNumber>
    </recommendedName>
    <alternativeName>
        <fullName evidence="1">IMP--aspartate ligase</fullName>
    </alternativeName>
</protein>
<comment type="function">
    <text evidence="1">Plays an important role in the de novo pathway of purine nucleotide biosynthesis. Catalyzes the first committed step in the biosynthesis of AMP from IMP.</text>
</comment>
<comment type="catalytic activity">
    <reaction evidence="1">
        <text>IMP + L-aspartate + GTP = N(6)-(1,2-dicarboxyethyl)-AMP + GDP + phosphate + 2 H(+)</text>
        <dbReference type="Rhea" id="RHEA:15753"/>
        <dbReference type="ChEBI" id="CHEBI:15378"/>
        <dbReference type="ChEBI" id="CHEBI:29991"/>
        <dbReference type="ChEBI" id="CHEBI:37565"/>
        <dbReference type="ChEBI" id="CHEBI:43474"/>
        <dbReference type="ChEBI" id="CHEBI:57567"/>
        <dbReference type="ChEBI" id="CHEBI:58053"/>
        <dbReference type="ChEBI" id="CHEBI:58189"/>
        <dbReference type="EC" id="6.3.4.4"/>
    </reaction>
</comment>
<comment type="cofactor">
    <cofactor evidence="1">
        <name>Mg(2+)</name>
        <dbReference type="ChEBI" id="CHEBI:18420"/>
    </cofactor>
    <text evidence="1">Binds 1 Mg(2+) ion per subunit.</text>
</comment>
<comment type="pathway">
    <text evidence="1">Purine metabolism; AMP biosynthesis via de novo pathway; AMP from IMP: step 1/2.</text>
</comment>
<comment type="subunit">
    <text evidence="1">Homodimer.</text>
</comment>
<comment type="subcellular location">
    <subcellularLocation>
        <location evidence="1">Cytoplasm</location>
    </subcellularLocation>
</comment>
<comment type="similarity">
    <text evidence="1">Belongs to the adenylosuccinate synthetase family.</text>
</comment>
<comment type="sequence caution" evidence="2">
    <conflict type="erroneous initiation">
        <sequence resource="EMBL-CDS" id="ABG31522"/>
    </conflict>
</comment>
<name>PURA_ROSDO</name>
<gene>
    <name evidence="1" type="primary">purA</name>
    <name type="ordered locus">RD1_1912</name>
</gene>
<accession>Q168S1</accession>
<feature type="chain" id="PRO_0000321808" description="Adenylosuccinate synthetase">
    <location>
        <begin position="1"/>
        <end position="431"/>
    </location>
</feature>
<feature type="active site" description="Proton acceptor" evidence="1">
    <location>
        <position position="13"/>
    </location>
</feature>
<feature type="active site" description="Proton donor" evidence="1">
    <location>
        <position position="41"/>
    </location>
</feature>
<feature type="binding site" evidence="1">
    <location>
        <begin position="12"/>
        <end position="18"/>
    </location>
    <ligand>
        <name>GTP</name>
        <dbReference type="ChEBI" id="CHEBI:37565"/>
    </ligand>
</feature>
<feature type="binding site" description="in other chain" evidence="1">
    <location>
        <begin position="13"/>
        <end position="16"/>
    </location>
    <ligand>
        <name>IMP</name>
        <dbReference type="ChEBI" id="CHEBI:58053"/>
        <note>ligand shared between dimeric partners</note>
    </ligand>
</feature>
<feature type="binding site" evidence="1">
    <location>
        <position position="13"/>
    </location>
    <ligand>
        <name>Mg(2+)</name>
        <dbReference type="ChEBI" id="CHEBI:18420"/>
    </ligand>
</feature>
<feature type="binding site" description="in other chain" evidence="1">
    <location>
        <begin position="38"/>
        <end position="41"/>
    </location>
    <ligand>
        <name>IMP</name>
        <dbReference type="ChEBI" id="CHEBI:58053"/>
        <note>ligand shared between dimeric partners</note>
    </ligand>
</feature>
<feature type="binding site" evidence="1">
    <location>
        <begin position="40"/>
        <end position="42"/>
    </location>
    <ligand>
        <name>GTP</name>
        <dbReference type="ChEBI" id="CHEBI:37565"/>
    </ligand>
</feature>
<feature type="binding site" evidence="1">
    <location>
        <position position="40"/>
    </location>
    <ligand>
        <name>Mg(2+)</name>
        <dbReference type="ChEBI" id="CHEBI:18420"/>
    </ligand>
</feature>
<feature type="binding site" description="in other chain" evidence="1">
    <location>
        <position position="131"/>
    </location>
    <ligand>
        <name>IMP</name>
        <dbReference type="ChEBI" id="CHEBI:58053"/>
        <note>ligand shared between dimeric partners</note>
    </ligand>
</feature>
<feature type="binding site" evidence="1">
    <location>
        <position position="145"/>
    </location>
    <ligand>
        <name>IMP</name>
        <dbReference type="ChEBI" id="CHEBI:58053"/>
        <note>ligand shared between dimeric partners</note>
    </ligand>
</feature>
<feature type="binding site" description="in other chain" evidence="1">
    <location>
        <position position="225"/>
    </location>
    <ligand>
        <name>IMP</name>
        <dbReference type="ChEBI" id="CHEBI:58053"/>
        <note>ligand shared between dimeric partners</note>
    </ligand>
</feature>
<feature type="binding site" description="in other chain" evidence="1">
    <location>
        <position position="240"/>
    </location>
    <ligand>
        <name>IMP</name>
        <dbReference type="ChEBI" id="CHEBI:58053"/>
        <note>ligand shared between dimeric partners</note>
    </ligand>
</feature>
<feature type="binding site" evidence="1">
    <location>
        <begin position="300"/>
        <end position="306"/>
    </location>
    <ligand>
        <name>substrate</name>
    </ligand>
</feature>
<feature type="binding site" description="in other chain" evidence="1">
    <location>
        <position position="304"/>
    </location>
    <ligand>
        <name>IMP</name>
        <dbReference type="ChEBI" id="CHEBI:58053"/>
        <note>ligand shared between dimeric partners</note>
    </ligand>
</feature>
<feature type="binding site" evidence="1">
    <location>
        <position position="306"/>
    </location>
    <ligand>
        <name>GTP</name>
        <dbReference type="ChEBI" id="CHEBI:37565"/>
    </ligand>
</feature>
<feature type="binding site" evidence="1">
    <location>
        <begin position="332"/>
        <end position="334"/>
    </location>
    <ligand>
        <name>GTP</name>
        <dbReference type="ChEBI" id="CHEBI:37565"/>
    </ligand>
</feature>
<feature type="binding site" evidence="1">
    <location>
        <begin position="414"/>
        <end position="416"/>
    </location>
    <ligand>
        <name>GTP</name>
        <dbReference type="ChEBI" id="CHEBI:37565"/>
    </ligand>
</feature>
<sequence length="431" mass="46520">MANVVVVGAQWGDEGKGKIVDWLSERADVIARFQGGHNAGHTLVIDGKVYKLNALPSGVVRGGKLSVIGNGVVLDPWHLIKEIDIIRGQGVDISPETLMIAENTPLILPIHGELDRAREEAASKGTKIGTTGRGIGPAYEDKVGRRSVRVADLADTATLEARVDRALQHHDPLRKGLGIEPVDRDALVAQLVEIAPHILKYAAPVWKVLNEKRRAGKRILFEGAQGALLDIDFGTYPFVTSSNVIAGQAATGVGVGPGAINYVLGIVKAYTTRVGEGPFPAELDDADGQRLGERGHEFGTVTGRKRRCGWFDAVLVRQTCATSGVNGIALTKLDVLDGFETLKICVGYELDGKRMDYLPTAADHQARCRPIYEEMPGWSDSTEGARSWADLPANAIKYVRRVEELIDCPVALLSTSPEREDTILVTDPFAD</sequence>
<keyword id="KW-0963">Cytoplasm</keyword>
<keyword id="KW-0342">GTP-binding</keyword>
<keyword id="KW-0436">Ligase</keyword>
<keyword id="KW-0460">Magnesium</keyword>
<keyword id="KW-0479">Metal-binding</keyword>
<keyword id="KW-0547">Nucleotide-binding</keyword>
<keyword id="KW-0658">Purine biosynthesis</keyword>
<keyword id="KW-1185">Reference proteome</keyword>
<proteinExistence type="inferred from homology"/>
<reference key="1">
    <citation type="journal article" date="2007" name="J. Bacteriol.">
        <title>The complete genome sequence of Roseobacter denitrificans reveals a mixotrophic rather than photosynthetic metabolism.</title>
        <authorList>
            <person name="Swingley W.D."/>
            <person name="Sadekar S."/>
            <person name="Mastrian S.D."/>
            <person name="Matthies H.J."/>
            <person name="Hao J."/>
            <person name="Ramos H."/>
            <person name="Acharya C.R."/>
            <person name="Conrad A.L."/>
            <person name="Taylor H.L."/>
            <person name="Dejesa L.C."/>
            <person name="Shah M.K."/>
            <person name="O'Huallachain M.E."/>
            <person name="Lince M.T."/>
            <person name="Blankenship R.E."/>
            <person name="Beatty J.T."/>
            <person name="Touchman J.W."/>
        </authorList>
    </citation>
    <scope>NUCLEOTIDE SEQUENCE [LARGE SCALE GENOMIC DNA]</scope>
    <source>
        <strain>ATCC 33942 / OCh 114</strain>
    </source>
</reference>
<organism>
    <name type="scientific">Roseobacter denitrificans (strain ATCC 33942 / OCh 114)</name>
    <name type="common">Erythrobacter sp. (strain OCh 114)</name>
    <name type="synonym">Roseobacter denitrificans</name>
    <dbReference type="NCBI Taxonomy" id="375451"/>
    <lineage>
        <taxon>Bacteria</taxon>
        <taxon>Pseudomonadati</taxon>
        <taxon>Pseudomonadota</taxon>
        <taxon>Alphaproteobacteria</taxon>
        <taxon>Rhodobacterales</taxon>
        <taxon>Roseobacteraceae</taxon>
        <taxon>Roseobacter</taxon>
    </lineage>
</organism>